<name>RL9_HAEIE</name>
<organism>
    <name type="scientific">Haemophilus influenzae (strain PittEE)</name>
    <dbReference type="NCBI Taxonomy" id="374930"/>
    <lineage>
        <taxon>Bacteria</taxon>
        <taxon>Pseudomonadati</taxon>
        <taxon>Pseudomonadota</taxon>
        <taxon>Gammaproteobacteria</taxon>
        <taxon>Pasteurellales</taxon>
        <taxon>Pasteurellaceae</taxon>
        <taxon>Haemophilus</taxon>
    </lineage>
</organism>
<protein>
    <recommendedName>
        <fullName evidence="1">Large ribosomal subunit protein bL9</fullName>
    </recommendedName>
    <alternativeName>
        <fullName evidence="2">50S ribosomal protein L9</fullName>
    </alternativeName>
</protein>
<evidence type="ECO:0000255" key="1">
    <source>
        <dbReference type="HAMAP-Rule" id="MF_00503"/>
    </source>
</evidence>
<evidence type="ECO:0000305" key="2"/>
<proteinExistence type="inferred from homology"/>
<sequence>MQVILLDKIVHLGQVGDQVNVKSGFARNFLIPQGKAVMATKANIEHFEARRAELEATAAANLAAAQARAAEVTALGSVTIASKAGDEGRLFGAITTRDVAEAVTAAGVKIAKSEVRLPNGPIRTLGDHDVRFQLHGEVFAALDVIVVAE</sequence>
<keyword id="KW-0687">Ribonucleoprotein</keyword>
<keyword id="KW-0689">Ribosomal protein</keyword>
<keyword id="KW-0694">RNA-binding</keyword>
<keyword id="KW-0699">rRNA-binding</keyword>
<feature type="chain" id="PRO_1000014786" description="Large ribosomal subunit protein bL9">
    <location>
        <begin position="1"/>
        <end position="149"/>
    </location>
</feature>
<accession>A5U9V1</accession>
<dbReference type="EMBL" id="CP000671">
    <property type="protein sequence ID" value="ABQ97552.1"/>
    <property type="molecule type" value="Genomic_DNA"/>
</dbReference>
<dbReference type="SMR" id="A5U9V1"/>
<dbReference type="KEGG" id="hip:CGSHiEE_00270"/>
<dbReference type="HOGENOM" id="CLU_078938_4_1_6"/>
<dbReference type="GO" id="GO:1990904">
    <property type="term" value="C:ribonucleoprotein complex"/>
    <property type="evidence" value="ECO:0007669"/>
    <property type="project" value="UniProtKB-KW"/>
</dbReference>
<dbReference type="GO" id="GO:0005840">
    <property type="term" value="C:ribosome"/>
    <property type="evidence" value="ECO:0007669"/>
    <property type="project" value="UniProtKB-KW"/>
</dbReference>
<dbReference type="GO" id="GO:0019843">
    <property type="term" value="F:rRNA binding"/>
    <property type="evidence" value="ECO:0007669"/>
    <property type="project" value="UniProtKB-UniRule"/>
</dbReference>
<dbReference type="GO" id="GO:0003735">
    <property type="term" value="F:structural constituent of ribosome"/>
    <property type="evidence" value="ECO:0007669"/>
    <property type="project" value="InterPro"/>
</dbReference>
<dbReference type="GO" id="GO:0006412">
    <property type="term" value="P:translation"/>
    <property type="evidence" value="ECO:0007669"/>
    <property type="project" value="UniProtKB-UniRule"/>
</dbReference>
<dbReference type="FunFam" id="3.10.430.100:FF:000001">
    <property type="entry name" value="50S ribosomal protein L9"/>
    <property type="match status" value="1"/>
</dbReference>
<dbReference type="FunFam" id="3.40.5.10:FF:000001">
    <property type="entry name" value="50S ribosomal protein L9"/>
    <property type="match status" value="1"/>
</dbReference>
<dbReference type="Gene3D" id="3.10.430.100">
    <property type="entry name" value="Ribosomal protein L9, C-terminal domain"/>
    <property type="match status" value="1"/>
</dbReference>
<dbReference type="Gene3D" id="3.40.5.10">
    <property type="entry name" value="Ribosomal protein L9, N-terminal domain"/>
    <property type="match status" value="1"/>
</dbReference>
<dbReference type="HAMAP" id="MF_00503">
    <property type="entry name" value="Ribosomal_bL9"/>
    <property type="match status" value="1"/>
</dbReference>
<dbReference type="InterPro" id="IPR000244">
    <property type="entry name" value="Ribosomal_bL9"/>
</dbReference>
<dbReference type="InterPro" id="IPR009027">
    <property type="entry name" value="Ribosomal_bL9/RNase_H1_N"/>
</dbReference>
<dbReference type="InterPro" id="IPR020594">
    <property type="entry name" value="Ribosomal_bL9_bac/chp"/>
</dbReference>
<dbReference type="InterPro" id="IPR020069">
    <property type="entry name" value="Ribosomal_bL9_C"/>
</dbReference>
<dbReference type="InterPro" id="IPR036791">
    <property type="entry name" value="Ribosomal_bL9_C_sf"/>
</dbReference>
<dbReference type="InterPro" id="IPR020070">
    <property type="entry name" value="Ribosomal_bL9_N"/>
</dbReference>
<dbReference type="InterPro" id="IPR036935">
    <property type="entry name" value="Ribosomal_bL9_N_sf"/>
</dbReference>
<dbReference type="NCBIfam" id="TIGR00158">
    <property type="entry name" value="L9"/>
    <property type="match status" value="1"/>
</dbReference>
<dbReference type="PANTHER" id="PTHR21368">
    <property type="entry name" value="50S RIBOSOMAL PROTEIN L9"/>
    <property type="match status" value="1"/>
</dbReference>
<dbReference type="Pfam" id="PF03948">
    <property type="entry name" value="Ribosomal_L9_C"/>
    <property type="match status" value="1"/>
</dbReference>
<dbReference type="Pfam" id="PF01281">
    <property type="entry name" value="Ribosomal_L9_N"/>
    <property type="match status" value="1"/>
</dbReference>
<dbReference type="SUPFAM" id="SSF55658">
    <property type="entry name" value="L9 N-domain-like"/>
    <property type="match status" value="1"/>
</dbReference>
<dbReference type="SUPFAM" id="SSF55653">
    <property type="entry name" value="Ribosomal protein L9 C-domain"/>
    <property type="match status" value="1"/>
</dbReference>
<dbReference type="PROSITE" id="PS00651">
    <property type="entry name" value="RIBOSOMAL_L9"/>
    <property type="match status" value="1"/>
</dbReference>
<gene>
    <name evidence="1" type="primary">rplI</name>
    <name type="ordered locus">CGSHiEE_00270</name>
</gene>
<comment type="function">
    <text evidence="1">Binds to the 23S rRNA.</text>
</comment>
<comment type="similarity">
    <text evidence="1">Belongs to the bacterial ribosomal protein bL9 family.</text>
</comment>
<reference key="1">
    <citation type="journal article" date="2007" name="Genome Biol.">
        <title>Characterization and modeling of the Haemophilus influenzae core and supragenomes based on the complete genomic sequences of Rd and 12 clinical nontypeable strains.</title>
        <authorList>
            <person name="Hogg J.S."/>
            <person name="Hu F.Z."/>
            <person name="Janto B."/>
            <person name="Boissy R."/>
            <person name="Hayes J."/>
            <person name="Keefe R."/>
            <person name="Post J.C."/>
            <person name="Ehrlich G.D."/>
        </authorList>
    </citation>
    <scope>NUCLEOTIDE SEQUENCE [LARGE SCALE GENOMIC DNA]</scope>
    <source>
        <strain>PittEE</strain>
    </source>
</reference>